<organism>
    <name type="scientific">Homo sapiens</name>
    <name type="common">Human</name>
    <dbReference type="NCBI Taxonomy" id="9606"/>
    <lineage>
        <taxon>Eukaryota</taxon>
        <taxon>Metazoa</taxon>
        <taxon>Chordata</taxon>
        <taxon>Craniata</taxon>
        <taxon>Vertebrata</taxon>
        <taxon>Euteleostomi</taxon>
        <taxon>Mammalia</taxon>
        <taxon>Eutheria</taxon>
        <taxon>Euarchontoglires</taxon>
        <taxon>Primates</taxon>
        <taxon>Haplorrhini</taxon>
        <taxon>Catarrhini</taxon>
        <taxon>Hominidae</taxon>
        <taxon>Homo</taxon>
    </lineage>
</organism>
<dbReference type="EMBL" id="AK057290">
    <property type="protein sequence ID" value="BAG51897.1"/>
    <property type="molecule type" value="mRNA"/>
</dbReference>
<dbReference type="EMBL" id="AK094310">
    <property type="protein sequence ID" value="BAC04328.1"/>
    <property type="molecule type" value="mRNA"/>
</dbReference>
<dbReference type="EMBL" id="AC008848">
    <property type="status" value="NOT_ANNOTATED_CDS"/>
    <property type="molecule type" value="Genomic_DNA"/>
</dbReference>
<dbReference type="EMBL" id="AC012617">
    <property type="status" value="NOT_ANNOTATED_CDS"/>
    <property type="molecule type" value="Genomic_DNA"/>
</dbReference>
<dbReference type="EMBL" id="BC068453">
    <property type="protein sequence ID" value="AAH68453.1"/>
    <property type="molecule type" value="mRNA"/>
</dbReference>
<dbReference type="CCDS" id="CCDS12491.1">
    <molecule id="Q8N9K5-2"/>
</dbReference>
<dbReference type="RefSeq" id="NP_001035939.1">
    <molecule id="Q8N9K5-2"/>
    <property type="nucleotide sequence ID" value="NM_001042474.2"/>
</dbReference>
<dbReference type="RefSeq" id="NP_001353117.1">
    <molecule id="Q8N9K5-2"/>
    <property type="nucleotide sequence ID" value="NM_001366188.1"/>
</dbReference>
<dbReference type="RefSeq" id="NP_001353118.1">
    <molecule id="Q8N9K5-2"/>
    <property type="nucleotide sequence ID" value="NM_001366189.1"/>
</dbReference>
<dbReference type="RefSeq" id="NP_689690.3">
    <molecule id="Q8N9K5-2"/>
    <property type="nucleotide sequence ID" value="NM_152477.4"/>
</dbReference>
<dbReference type="RefSeq" id="XP_011524814.1">
    <molecule id="Q8N9K5-2"/>
    <property type="nucleotide sequence ID" value="XM_011526512.3"/>
</dbReference>
<dbReference type="RefSeq" id="XP_011524816.1">
    <molecule id="Q8N9K5-2"/>
    <property type="nucleotide sequence ID" value="XM_011526514.3"/>
</dbReference>
<dbReference type="RefSeq" id="XP_016881830.1">
    <property type="nucleotide sequence ID" value="XM_017026341.1"/>
</dbReference>
<dbReference type="RefSeq" id="XP_054175892.1">
    <molecule id="Q8N9K5-2"/>
    <property type="nucleotide sequence ID" value="XM_054319917.1"/>
</dbReference>
<dbReference type="RefSeq" id="XP_054175893.1">
    <molecule id="Q8N9K5-2"/>
    <property type="nucleotide sequence ID" value="XM_054319918.1"/>
</dbReference>
<dbReference type="SMR" id="Q8N9K5"/>
<dbReference type="BioGRID" id="127099">
    <property type="interactions" value="3"/>
</dbReference>
<dbReference type="FunCoup" id="Q8N9K5">
    <property type="interactions" value="5"/>
</dbReference>
<dbReference type="IntAct" id="Q8N9K5">
    <property type="interactions" value="7"/>
</dbReference>
<dbReference type="STRING" id="9606.ENSP00000376013"/>
<dbReference type="GlyGen" id="Q8N9K5">
    <property type="glycosylation" value="1 site, 1 O-linked glycan (1 site)"/>
</dbReference>
<dbReference type="iPTMnet" id="Q8N9K5"/>
<dbReference type="PhosphoSitePlus" id="Q8N9K5"/>
<dbReference type="BioMuta" id="ZNF565"/>
<dbReference type="DMDM" id="74760034"/>
<dbReference type="jPOST" id="Q8N9K5"/>
<dbReference type="MassIVE" id="Q8N9K5"/>
<dbReference type="PaxDb" id="9606-ENSP00000306869"/>
<dbReference type="PeptideAtlas" id="Q8N9K5"/>
<dbReference type="ProteomicsDB" id="72550">
    <molecule id="Q8N9K5-1"/>
</dbReference>
<dbReference type="Antibodypedia" id="29730">
    <property type="antibodies" value="78 antibodies from 13 providers"/>
</dbReference>
<dbReference type="DNASU" id="147929"/>
<dbReference type="Ensembl" id="ENST00000304116.10">
    <molecule id="Q8N9K5-2"/>
    <property type="protein sequence ID" value="ENSP00000306869.5"/>
    <property type="gene ID" value="ENSG00000196357.12"/>
</dbReference>
<dbReference type="Ensembl" id="ENST00000355114.9">
    <molecule id="Q8N9K5-1"/>
    <property type="protein sequence ID" value="ENSP00000347234.5"/>
    <property type="gene ID" value="ENSG00000196357.12"/>
</dbReference>
<dbReference type="Ensembl" id="ENST00000392173.6">
    <molecule id="Q8N9K5-2"/>
    <property type="protein sequence ID" value="ENSP00000376013.1"/>
    <property type="gene ID" value="ENSG00000196357.12"/>
</dbReference>
<dbReference type="GeneID" id="147929"/>
<dbReference type="KEGG" id="hsa:147929"/>
<dbReference type="MANE-Select" id="ENST00000304116.10">
    <molecule id="Q8N9K5-2"/>
    <property type="protein sequence ID" value="ENSP00000306869.5"/>
    <property type="RefSeq nucleotide sequence ID" value="NM_152477.5"/>
    <property type="RefSeq protein sequence ID" value="NP_689690.3"/>
</dbReference>
<dbReference type="UCSC" id="uc002odn.4">
    <molecule id="Q8N9K5-1"/>
    <property type="organism name" value="human"/>
</dbReference>
<dbReference type="AGR" id="HGNC:26726"/>
<dbReference type="CTD" id="147929"/>
<dbReference type="DisGeNET" id="147929"/>
<dbReference type="GeneCards" id="ZNF565"/>
<dbReference type="HGNC" id="HGNC:26726">
    <property type="gene designation" value="ZNF565"/>
</dbReference>
<dbReference type="HPA" id="ENSG00000196357">
    <property type="expression patterns" value="Low tissue specificity"/>
</dbReference>
<dbReference type="neXtProt" id="NX_Q8N9K5"/>
<dbReference type="OpenTargets" id="ENSG00000196357"/>
<dbReference type="PharmGKB" id="PA134970652"/>
<dbReference type="VEuPathDB" id="HostDB:ENSG00000196357"/>
<dbReference type="eggNOG" id="KOG1721">
    <property type="taxonomic scope" value="Eukaryota"/>
</dbReference>
<dbReference type="GeneTree" id="ENSGT00940000163001"/>
<dbReference type="HOGENOM" id="CLU_002678_44_5_1"/>
<dbReference type="InParanoid" id="Q8N9K5"/>
<dbReference type="OMA" id="NMPTFEH"/>
<dbReference type="OrthoDB" id="9411774at2759"/>
<dbReference type="PAN-GO" id="Q8N9K5">
    <property type="GO annotations" value="4 GO annotations based on evolutionary models"/>
</dbReference>
<dbReference type="PhylomeDB" id="Q8N9K5"/>
<dbReference type="TreeFam" id="TF341817"/>
<dbReference type="PathwayCommons" id="Q8N9K5"/>
<dbReference type="Reactome" id="R-HSA-212436">
    <property type="pathway name" value="Generic Transcription Pathway"/>
</dbReference>
<dbReference type="SignaLink" id="Q8N9K5"/>
<dbReference type="BioGRID-ORCS" id="147929">
    <property type="hits" value="9 hits in 1170 CRISPR screens"/>
</dbReference>
<dbReference type="ChiTaRS" id="ZNF565">
    <property type="organism name" value="human"/>
</dbReference>
<dbReference type="GenomeRNAi" id="147929"/>
<dbReference type="Pharos" id="Q8N9K5">
    <property type="development level" value="Tdark"/>
</dbReference>
<dbReference type="PRO" id="PR:Q8N9K5"/>
<dbReference type="Proteomes" id="UP000005640">
    <property type="component" value="Chromosome 19"/>
</dbReference>
<dbReference type="RNAct" id="Q8N9K5">
    <property type="molecule type" value="protein"/>
</dbReference>
<dbReference type="Bgee" id="ENSG00000196357">
    <property type="expression patterns" value="Expressed in buccal mucosa cell and 166 other cell types or tissues"/>
</dbReference>
<dbReference type="ExpressionAtlas" id="Q8N9K5">
    <property type="expression patterns" value="baseline and differential"/>
</dbReference>
<dbReference type="GO" id="GO:0005634">
    <property type="term" value="C:nucleus"/>
    <property type="evidence" value="ECO:0000318"/>
    <property type="project" value="GO_Central"/>
</dbReference>
<dbReference type="GO" id="GO:0000981">
    <property type="term" value="F:DNA-binding transcription factor activity, RNA polymerase II-specific"/>
    <property type="evidence" value="ECO:0000318"/>
    <property type="project" value="GO_Central"/>
</dbReference>
<dbReference type="GO" id="GO:0000978">
    <property type="term" value="F:RNA polymerase II cis-regulatory region sequence-specific DNA binding"/>
    <property type="evidence" value="ECO:0000318"/>
    <property type="project" value="GO_Central"/>
</dbReference>
<dbReference type="GO" id="GO:0008270">
    <property type="term" value="F:zinc ion binding"/>
    <property type="evidence" value="ECO:0007669"/>
    <property type="project" value="UniProtKB-KW"/>
</dbReference>
<dbReference type="GO" id="GO:0006357">
    <property type="term" value="P:regulation of transcription by RNA polymerase II"/>
    <property type="evidence" value="ECO:0000318"/>
    <property type="project" value="GO_Central"/>
</dbReference>
<dbReference type="CDD" id="cd07765">
    <property type="entry name" value="KRAB_A-box"/>
    <property type="match status" value="1"/>
</dbReference>
<dbReference type="FunFam" id="3.30.160.60:FF:000352">
    <property type="entry name" value="zinc finger protein 3 homolog"/>
    <property type="match status" value="1"/>
</dbReference>
<dbReference type="FunFam" id="3.30.160.60:FF:001425">
    <property type="entry name" value="Zinc finger protein 331"/>
    <property type="match status" value="1"/>
</dbReference>
<dbReference type="FunFam" id="3.30.160.60:FF:001498">
    <property type="entry name" value="Zinc finger protein 404"/>
    <property type="match status" value="1"/>
</dbReference>
<dbReference type="FunFam" id="3.30.160.60:FF:002254">
    <property type="entry name" value="Zinc finger protein 540"/>
    <property type="match status" value="5"/>
</dbReference>
<dbReference type="FunFam" id="3.30.160.60:FF:000737">
    <property type="entry name" value="Zinc finger protein 565"/>
    <property type="match status" value="2"/>
</dbReference>
<dbReference type="FunFam" id="3.30.160.60:FF:001936">
    <property type="entry name" value="Zinc finger protein 565"/>
    <property type="match status" value="1"/>
</dbReference>
<dbReference type="FunFam" id="3.30.160.60:FF:002071">
    <property type="entry name" value="Zinc finger protein 570"/>
    <property type="match status" value="1"/>
</dbReference>
<dbReference type="Gene3D" id="6.10.140.140">
    <property type="match status" value="1"/>
</dbReference>
<dbReference type="Gene3D" id="3.30.160.60">
    <property type="entry name" value="Classic Zinc Finger"/>
    <property type="match status" value="12"/>
</dbReference>
<dbReference type="InterPro" id="IPR001909">
    <property type="entry name" value="KRAB"/>
</dbReference>
<dbReference type="InterPro" id="IPR036051">
    <property type="entry name" value="KRAB_dom_sf"/>
</dbReference>
<dbReference type="InterPro" id="IPR036236">
    <property type="entry name" value="Znf_C2H2_sf"/>
</dbReference>
<dbReference type="InterPro" id="IPR013087">
    <property type="entry name" value="Znf_C2H2_type"/>
</dbReference>
<dbReference type="PANTHER" id="PTHR14003">
    <property type="entry name" value="TRANSCRIPTIONAL REPRESSOR PROTEIN YY"/>
    <property type="match status" value="1"/>
</dbReference>
<dbReference type="PANTHER" id="PTHR14003:SF23">
    <property type="entry name" value="ZINC FINGER PROTEIN 143"/>
    <property type="match status" value="1"/>
</dbReference>
<dbReference type="Pfam" id="PF01352">
    <property type="entry name" value="KRAB"/>
    <property type="match status" value="1"/>
</dbReference>
<dbReference type="Pfam" id="PF00096">
    <property type="entry name" value="zf-C2H2"/>
    <property type="match status" value="12"/>
</dbReference>
<dbReference type="SMART" id="SM00349">
    <property type="entry name" value="KRAB"/>
    <property type="match status" value="1"/>
</dbReference>
<dbReference type="SMART" id="SM00355">
    <property type="entry name" value="ZnF_C2H2"/>
    <property type="match status" value="12"/>
</dbReference>
<dbReference type="SUPFAM" id="SSF57667">
    <property type="entry name" value="beta-beta-alpha zinc fingers"/>
    <property type="match status" value="7"/>
</dbReference>
<dbReference type="SUPFAM" id="SSF109640">
    <property type="entry name" value="KRAB domain (Kruppel-associated box)"/>
    <property type="match status" value="1"/>
</dbReference>
<dbReference type="PROSITE" id="PS50805">
    <property type="entry name" value="KRAB"/>
    <property type="match status" value="1"/>
</dbReference>
<dbReference type="PROSITE" id="PS00028">
    <property type="entry name" value="ZINC_FINGER_C2H2_1"/>
    <property type="match status" value="12"/>
</dbReference>
<dbReference type="PROSITE" id="PS50157">
    <property type="entry name" value="ZINC_FINGER_C2H2_2"/>
    <property type="match status" value="12"/>
</dbReference>
<protein>
    <recommendedName>
        <fullName>Zinc finger protein 565</fullName>
    </recommendedName>
</protein>
<sequence length="539" mass="62445">MRRGPWERWSLASHRLDAGLCTCPREESREIRAGQIVLKAMAQGLVTFRDVAIEFSLEEWKCLEPAQRDLYREVTLENFGHLASLGLSISKPDVVSLLEQGKEPWMIANDVTGPWCPDLESRCEKFLQKDIFEIGAFNWEIMESLKCSDLEGSDFRADWECEGQFERQVNEECYFKQVNVTYGHMPVFQHHTSHTVRQSRETGEKLMECHECGKAFSRGSHLIQHQKIHTGEKPFGCKECGKAFSRASHLVQHQRIHTGEKPYDCKDCGKAFGRTSELILHQRLHTGVKPYECKECGKTFRQHSQLILHQRTHTGEKPYVCKDCGKAFIRGSQLTVHRRIHTGARPYECKECGKAFRQHSQLTVHQRIHTGEKPYECKECGKGFIHSSEVTRHQRIHSGEKPYECKECGKAFRQHAQLTRHQRVHTGDRPYECKDCGKAFSRSSYLIQHQRIHTGDKPYECKECGKAFIRVSQLTHHQRIHTCEKPYECRECGMAFIRSSQLTEHQRIHPGIKPYECRECGQAFILGSQLIEHYRIHTG</sequence>
<feature type="chain" id="PRO_0000047655" description="Zinc finger protein 565">
    <location>
        <begin position="1"/>
        <end position="539"/>
    </location>
</feature>
<feature type="domain" description="KRAB" evidence="2">
    <location>
        <begin position="46"/>
        <end position="117"/>
    </location>
</feature>
<feature type="zinc finger region" description="C2H2-type 1" evidence="1">
    <location>
        <begin position="207"/>
        <end position="229"/>
    </location>
</feature>
<feature type="zinc finger region" description="C2H2-type 2" evidence="1">
    <location>
        <begin position="235"/>
        <end position="257"/>
    </location>
</feature>
<feature type="zinc finger region" description="C2H2-type 3" evidence="1">
    <location>
        <begin position="263"/>
        <end position="285"/>
    </location>
</feature>
<feature type="zinc finger region" description="C2H2-type 4" evidence="1">
    <location>
        <begin position="291"/>
        <end position="313"/>
    </location>
</feature>
<feature type="zinc finger region" description="C2H2-type 5" evidence="1">
    <location>
        <begin position="319"/>
        <end position="341"/>
    </location>
</feature>
<feature type="zinc finger region" description="C2H2-type 6" evidence="1">
    <location>
        <begin position="347"/>
        <end position="369"/>
    </location>
</feature>
<feature type="zinc finger region" description="C2H2-type 7" evidence="1">
    <location>
        <begin position="375"/>
        <end position="397"/>
    </location>
</feature>
<feature type="zinc finger region" description="C2H2-type 8" evidence="1">
    <location>
        <begin position="403"/>
        <end position="425"/>
    </location>
</feature>
<feature type="zinc finger region" description="C2H2-type 9" evidence="1">
    <location>
        <begin position="431"/>
        <end position="453"/>
    </location>
</feature>
<feature type="zinc finger region" description="C2H2-type 10" evidence="1">
    <location>
        <begin position="459"/>
        <end position="481"/>
    </location>
</feature>
<feature type="zinc finger region" description="C2H2-type 11" evidence="1">
    <location>
        <begin position="487"/>
        <end position="509"/>
    </location>
</feature>
<feature type="zinc finger region" description="C2H2-type 12" evidence="1">
    <location>
        <begin position="515"/>
        <end position="537"/>
    </location>
</feature>
<feature type="splice variant" id="VSP_055965" description="In isoform 2." evidence="4 5">
    <location>
        <begin position="1"/>
        <end position="40"/>
    </location>
</feature>
<feature type="sequence variant" id="VAR_023938" description="In dbSNP:rs4805162." evidence="3">
    <original>I</original>
    <variation>T</variation>
    <location>
        <position position="228"/>
    </location>
</feature>
<accession>Q8N9K5</accession>
<accession>B3KQ35</accession>
<accession>Q6NUS2</accession>
<comment type="function">
    <text>May be involved in transcriptional regulation.</text>
</comment>
<comment type="subcellular location">
    <subcellularLocation>
        <location evidence="6">Nucleus</location>
    </subcellularLocation>
</comment>
<comment type="alternative products">
    <event type="alternative splicing"/>
    <isoform>
        <id>Q8N9K5-1</id>
        <name>1</name>
        <sequence type="displayed"/>
    </isoform>
    <isoform>
        <id>Q8N9K5-2</id>
        <name>2</name>
        <sequence type="described" ref="VSP_055965"/>
    </isoform>
</comment>
<comment type="similarity">
    <text evidence="6">Belongs to the krueppel C2H2-type zinc-finger protein family.</text>
</comment>
<proteinExistence type="evidence at protein level"/>
<keyword id="KW-0025">Alternative splicing</keyword>
<keyword id="KW-0238">DNA-binding</keyword>
<keyword id="KW-0479">Metal-binding</keyword>
<keyword id="KW-0539">Nucleus</keyword>
<keyword id="KW-1267">Proteomics identification</keyword>
<keyword id="KW-1185">Reference proteome</keyword>
<keyword id="KW-0677">Repeat</keyword>
<keyword id="KW-0804">Transcription</keyword>
<keyword id="KW-0805">Transcription regulation</keyword>
<keyword id="KW-0862">Zinc</keyword>
<keyword id="KW-0863">Zinc-finger</keyword>
<gene>
    <name type="primary">ZNF565</name>
</gene>
<reference key="1">
    <citation type="journal article" date="2004" name="Nat. Genet.">
        <title>Complete sequencing and characterization of 21,243 full-length human cDNAs.</title>
        <authorList>
            <person name="Ota T."/>
            <person name="Suzuki Y."/>
            <person name="Nishikawa T."/>
            <person name="Otsuki T."/>
            <person name="Sugiyama T."/>
            <person name="Irie R."/>
            <person name="Wakamatsu A."/>
            <person name="Hayashi K."/>
            <person name="Sato H."/>
            <person name="Nagai K."/>
            <person name="Kimura K."/>
            <person name="Makita H."/>
            <person name="Sekine M."/>
            <person name="Obayashi M."/>
            <person name="Nishi T."/>
            <person name="Shibahara T."/>
            <person name="Tanaka T."/>
            <person name="Ishii S."/>
            <person name="Yamamoto J."/>
            <person name="Saito K."/>
            <person name="Kawai Y."/>
            <person name="Isono Y."/>
            <person name="Nakamura Y."/>
            <person name="Nagahari K."/>
            <person name="Murakami K."/>
            <person name="Yasuda T."/>
            <person name="Iwayanagi T."/>
            <person name="Wagatsuma M."/>
            <person name="Shiratori A."/>
            <person name="Sudo H."/>
            <person name="Hosoiri T."/>
            <person name="Kaku Y."/>
            <person name="Kodaira H."/>
            <person name="Kondo H."/>
            <person name="Sugawara M."/>
            <person name="Takahashi M."/>
            <person name="Kanda K."/>
            <person name="Yokoi T."/>
            <person name="Furuya T."/>
            <person name="Kikkawa E."/>
            <person name="Omura Y."/>
            <person name="Abe K."/>
            <person name="Kamihara K."/>
            <person name="Katsuta N."/>
            <person name="Sato K."/>
            <person name="Tanikawa M."/>
            <person name="Yamazaki M."/>
            <person name="Ninomiya K."/>
            <person name="Ishibashi T."/>
            <person name="Yamashita H."/>
            <person name="Murakawa K."/>
            <person name="Fujimori K."/>
            <person name="Tanai H."/>
            <person name="Kimata M."/>
            <person name="Watanabe M."/>
            <person name="Hiraoka S."/>
            <person name="Chiba Y."/>
            <person name="Ishida S."/>
            <person name="Ono Y."/>
            <person name="Takiguchi S."/>
            <person name="Watanabe S."/>
            <person name="Yosida M."/>
            <person name="Hotuta T."/>
            <person name="Kusano J."/>
            <person name="Kanehori K."/>
            <person name="Takahashi-Fujii A."/>
            <person name="Hara H."/>
            <person name="Tanase T.-O."/>
            <person name="Nomura Y."/>
            <person name="Togiya S."/>
            <person name="Komai F."/>
            <person name="Hara R."/>
            <person name="Takeuchi K."/>
            <person name="Arita M."/>
            <person name="Imose N."/>
            <person name="Musashino K."/>
            <person name="Yuuki H."/>
            <person name="Oshima A."/>
            <person name="Sasaki N."/>
            <person name="Aotsuka S."/>
            <person name="Yoshikawa Y."/>
            <person name="Matsunawa H."/>
            <person name="Ichihara T."/>
            <person name="Shiohata N."/>
            <person name="Sano S."/>
            <person name="Moriya S."/>
            <person name="Momiyama H."/>
            <person name="Satoh N."/>
            <person name="Takami S."/>
            <person name="Terashima Y."/>
            <person name="Suzuki O."/>
            <person name="Nakagawa S."/>
            <person name="Senoh A."/>
            <person name="Mizoguchi H."/>
            <person name="Goto Y."/>
            <person name="Shimizu F."/>
            <person name="Wakebe H."/>
            <person name="Hishigaki H."/>
            <person name="Watanabe T."/>
            <person name="Sugiyama A."/>
            <person name="Takemoto M."/>
            <person name="Kawakami B."/>
            <person name="Yamazaki M."/>
            <person name="Watanabe K."/>
            <person name="Kumagai A."/>
            <person name="Itakura S."/>
            <person name="Fukuzumi Y."/>
            <person name="Fujimori Y."/>
            <person name="Komiyama M."/>
            <person name="Tashiro H."/>
            <person name="Tanigami A."/>
            <person name="Fujiwara T."/>
            <person name="Ono T."/>
            <person name="Yamada K."/>
            <person name="Fujii Y."/>
            <person name="Ozaki K."/>
            <person name="Hirao M."/>
            <person name="Ohmori Y."/>
            <person name="Kawabata A."/>
            <person name="Hikiji T."/>
            <person name="Kobatake N."/>
            <person name="Inagaki H."/>
            <person name="Ikema Y."/>
            <person name="Okamoto S."/>
            <person name="Okitani R."/>
            <person name="Kawakami T."/>
            <person name="Noguchi S."/>
            <person name="Itoh T."/>
            <person name="Shigeta K."/>
            <person name="Senba T."/>
            <person name="Matsumura K."/>
            <person name="Nakajima Y."/>
            <person name="Mizuno T."/>
            <person name="Morinaga M."/>
            <person name="Sasaki M."/>
            <person name="Togashi T."/>
            <person name="Oyama M."/>
            <person name="Hata H."/>
            <person name="Watanabe M."/>
            <person name="Komatsu T."/>
            <person name="Mizushima-Sugano J."/>
            <person name="Satoh T."/>
            <person name="Shirai Y."/>
            <person name="Takahashi Y."/>
            <person name="Nakagawa K."/>
            <person name="Okumura K."/>
            <person name="Nagase T."/>
            <person name="Nomura N."/>
            <person name="Kikuchi H."/>
            <person name="Masuho Y."/>
            <person name="Yamashita R."/>
            <person name="Nakai K."/>
            <person name="Yada T."/>
            <person name="Nakamura Y."/>
            <person name="Ohara O."/>
            <person name="Isogai T."/>
            <person name="Sugano S."/>
        </authorList>
    </citation>
    <scope>NUCLEOTIDE SEQUENCE [LARGE SCALE MRNA] (ISOFORMS 1 AND 2)</scope>
    <source>
        <tissue>Cerebellum</tissue>
        <tissue>Testis</tissue>
    </source>
</reference>
<reference key="2">
    <citation type="journal article" date="2004" name="Nature">
        <title>The DNA sequence and biology of human chromosome 19.</title>
        <authorList>
            <person name="Grimwood J."/>
            <person name="Gordon L.A."/>
            <person name="Olsen A.S."/>
            <person name="Terry A."/>
            <person name="Schmutz J."/>
            <person name="Lamerdin J.E."/>
            <person name="Hellsten U."/>
            <person name="Goodstein D."/>
            <person name="Couronne O."/>
            <person name="Tran-Gyamfi M."/>
            <person name="Aerts A."/>
            <person name="Altherr M."/>
            <person name="Ashworth L."/>
            <person name="Bajorek E."/>
            <person name="Black S."/>
            <person name="Branscomb E."/>
            <person name="Caenepeel S."/>
            <person name="Carrano A.V."/>
            <person name="Caoile C."/>
            <person name="Chan Y.M."/>
            <person name="Christensen M."/>
            <person name="Cleland C.A."/>
            <person name="Copeland A."/>
            <person name="Dalin E."/>
            <person name="Dehal P."/>
            <person name="Denys M."/>
            <person name="Detter J.C."/>
            <person name="Escobar J."/>
            <person name="Flowers D."/>
            <person name="Fotopulos D."/>
            <person name="Garcia C."/>
            <person name="Georgescu A.M."/>
            <person name="Glavina T."/>
            <person name="Gomez M."/>
            <person name="Gonzales E."/>
            <person name="Groza M."/>
            <person name="Hammon N."/>
            <person name="Hawkins T."/>
            <person name="Haydu L."/>
            <person name="Ho I."/>
            <person name="Huang W."/>
            <person name="Israni S."/>
            <person name="Jett J."/>
            <person name="Kadner K."/>
            <person name="Kimball H."/>
            <person name="Kobayashi A."/>
            <person name="Larionov V."/>
            <person name="Leem S.-H."/>
            <person name="Lopez F."/>
            <person name="Lou Y."/>
            <person name="Lowry S."/>
            <person name="Malfatti S."/>
            <person name="Martinez D."/>
            <person name="McCready P.M."/>
            <person name="Medina C."/>
            <person name="Morgan J."/>
            <person name="Nelson K."/>
            <person name="Nolan M."/>
            <person name="Ovcharenko I."/>
            <person name="Pitluck S."/>
            <person name="Pollard M."/>
            <person name="Popkie A.P."/>
            <person name="Predki P."/>
            <person name="Quan G."/>
            <person name="Ramirez L."/>
            <person name="Rash S."/>
            <person name="Retterer J."/>
            <person name="Rodriguez A."/>
            <person name="Rogers S."/>
            <person name="Salamov A."/>
            <person name="Salazar A."/>
            <person name="She X."/>
            <person name="Smith D."/>
            <person name="Slezak T."/>
            <person name="Solovyev V."/>
            <person name="Thayer N."/>
            <person name="Tice H."/>
            <person name="Tsai M."/>
            <person name="Ustaszewska A."/>
            <person name="Vo N."/>
            <person name="Wagner M."/>
            <person name="Wheeler J."/>
            <person name="Wu K."/>
            <person name="Xie G."/>
            <person name="Yang J."/>
            <person name="Dubchak I."/>
            <person name="Furey T.S."/>
            <person name="DeJong P."/>
            <person name="Dickson M."/>
            <person name="Gordon D."/>
            <person name="Eichler E.E."/>
            <person name="Pennacchio L.A."/>
            <person name="Richardson P."/>
            <person name="Stubbs L."/>
            <person name="Rokhsar D.S."/>
            <person name="Myers R.M."/>
            <person name="Rubin E.M."/>
            <person name="Lucas S.M."/>
        </authorList>
    </citation>
    <scope>NUCLEOTIDE SEQUENCE [LARGE SCALE GENOMIC DNA]</scope>
</reference>
<reference key="3">
    <citation type="journal article" date="2004" name="Genome Res.">
        <title>The status, quality, and expansion of the NIH full-length cDNA project: the Mammalian Gene Collection (MGC).</title>
        <authorList>
            <consortium name="The MGC Project Team"/>
        </authorList>
    </citation>
    <scope>NUCLEOTIDE SEQUENCE [LARGE SCALE MRNA] (ISOFORM 2)</scope>
    <scope>VARIANT THR-228</scope>
    <source>
        <tissue>Placenta</tissue>
    </source>
</reference>
<name>ZN565_HUMAN</name>
<evidence type="ECO:0000255" key="1">
    <source>
        <dbReference type="PROSITE-ProRule" id="PRU00042"/>
    </source>
</evidence>
<evidence type="ECO:0000255" key="2">
    <source>
        <dbReference type="PROSITE-ProRule" id="PRU00119"/>
    </source>
</evidence>
<evidence type="ECO:0000269" key="3">
    <source>
    </source>
</evidence>
<evidence type="ECO:0000303" key="4">
    <source>
    </source>
</evidence>
<evidence type="ECO:0000303" key="5">
    <source>
    </source>
</evidence>
<evidence type="ECO:0000305" key="6"/>